<keyword id="KW-0067">ATP-binding</keyword>
<keyword id="KW-0418">Kinase</keyword>
<keyword id="KW-0545">Nucleotide biosynthesis</keyword>
<keyword id="KW-0547">Nucleotide-binding</keyword>
<keyword id="KW-1185">Reference proteome</keyword>
<keyword id="KW-0808">Transferase</keyword>
<protein>
    <recommendedName>
        <fullName evidence="1">Thymidylate kinase</fullName>
        <ecNumber evidence="1">2.7.4.9</ecNumber>
    </recommendedName>
    <alternativeName>
        <fullName evidence="1">dTMP kinase</fullName>
    </alternativeName>
</protein>
<organism>
    <name type="scientific">Bacillus licheniformis (strain ATCC 14580 / DSM 13 / JCM 2505 / CCUG 7422 / NBRC 12200 / NCIMB 9375 / NCTC 10341 / NRRL NRS-1264 / Gibson 46)</name>
    <dbReference type="NCBI Taxonomy" id="279010"/>
    <lineage>
        <taxon>Bacteria</taxon>
        <taxon>Bacillati</taxon>
        <taxon>Bacillota</taxon>
        <taxon>Bacilli</taxon>
        <taxon>Bacillales</taxon>
        <taxon>Bacillaceae</taxon>
        <taxon>Bacillus</taxon>
    </lineage>
</organism>
<accession>Q65PJ3</accession>
<accession>Q62ZY2</accession>
<reference key="1">
    <citation type="journal article" date="2004" name="J. Mol. Microbiol. Biotechnol.">
        <title>The complete genome sequence of Bacillus licheniformis DSM13, an organism with great industrial potential.</title>
        <authorList>
            <person name="Veith B."/>
            <person name="Herzberg C."/>
            <person name="Steckel S."/>
            <person name="Feesche J."/>
            <person name="Maurer K.H."/>
            <person name="Ehrenreich P."/>
            <person name="Baeumer S."/>
            <person name="Henne A."/>
            <person name="Liesegang H."/>
            <person name="Merkl R."/>
            <person name="Ehrenreich A."/>
            <person name="Gottschalk G."/>
        </authorList>
    </citation>
    <scope>NUCLEOTIDE SEQUENCE [LARGE SCALE GENOMIC DNA]</scope>
    <source>
        <strain>ATCC 14580 / DSM 13 / JCM 2505 / CCUG 7422 / NBRC 12200 / NCIMB 9375 / NCTC 10341 / NRRL NRS-1264 / Gibson 46</strain>
    </source>
</reference>
<reference key="2">
    <citation type="journal article" date="2004" name="Genome Biol.">
        <title>Complete genome sequence of the industrial bacterium Bacillus licheniformis and comparisons with closely related Bacillus species.</title>
        <authorList>
            <person name="Rey M.W."/>
            <person name="Ramaiya P."/>
            <person name="Nelson B.A."/>
            <person name="Brody-Karpin S.D."/>
            <person name="Zaretsky E.J."/>
            <person name="Tang M."/>
            <person name="Lopez de Leon A."/>
            <person name="Xiang H."/>
            <person name="Gusti V."/>
            <person name="Clausen I.G."/>
            <person name="Olsen P.B."/>
            <person name="Rasmussen M.D."/>
            <person name="Andersen J.T."/>
            <person name="Joergensen P.L."/>
            <person name="Larsen T.S."/>
            <person name="Sorokin A."/>
            <person name="Bolotin A."/>
            <person name="Lapidus A."/>
            <person name="Galleron N."/>
            <person name="Ehrlich S.D."/>
            <person name="Berka R.M."/>
        </authorList>
    </citation>
    <scope>NUCLEOTIDE SEQUENCE [LARGE SCALE GENOMIC DNA]</scope>
    <source>
        <strain>ATCC 14580 / DSM 13 / JCM 2505 / CCUG 7422 / NBRC 12200 / NCIMB 9375 / NCTC 10341 / NRRL NRS-1264 / Gibson 46</strain>
    </source>
</reference>
<feature type="chain" id="PRO_1000023148" description="Thymidylate kinase">
    <location>
        <begin position="1"/>
        <end position="212"/>
    </location>
</feature>
<feature type="binding site" evidence="1">
    <location>
        <begin position="10"/>
        <end position="17"/>
    </location>
    <ligand>
        <name>ATP</name>
        <dbReference type="ChEBI" id="CHEBI:30616"/>
    </ligand>
</feature>
<gene>
    <name evidence="1" type="primary">tmk</name>
    <name type="ordered locus">BLi00041</name>
    <name type="ordered locus">BL02509</name>
</gene>
<comment type="function">
    <text evidence="1">Phosphorylation of dTMP to form dTDP in both de novo and salvage pathways of dTTP synthesis.</text>
</comment>
<comment type="catalytic activity">
    <reaction evidence="1">
        <text>dTMP + ATP = dTDP + ADP</text>
        <dbReference type="Rhea" id="RHEA:13517"/>
        <dbReference type="ChEBI" id="CHEBI:30616"/>
        <dbReference type="ChEBI" id="CHEBI:58369"/>
        <dbReference type="ChEBI" id="CHEBI:63528"/>
        <dbReference type="ChEBI" id="CHEBI:456216"/>
        <dbReference type="EC" id="2.7.4.9"/>
    </reaction>
</comment>
<comment type="similarity">
    <text evidence="1">Belongs to the thymidylate kinase family.</text>
</comment>
<name>KTHY_BACLD</name>
<evidence type="ECO:0000255" key="1">
    <source>
        <dbReference type="HAMAP-Rule" id="MF_00165"/>
    </source>
</evidence>
<proteinExistence type="inferred from homology"/>
<sequence length="212" mass="23817">MNGLFITFEGPEGAGKTTILQAAADQLTKNGHSVLATREPGGIEISERIREVILNPSHTAMDPKTEALLYAAARRQHLVEKVKPALEEGKIVLCDRFIDSSLAYQGYARGLGIDEVFSVNQFAIGSLMPNVTIYFDIDPEEGIKRIDLNDAREKNRLDLEKLHFHQLVQKGYEEVMNRFPGRFRIVDASQSVELVLKRVNNIIEEALKENQL</sequence>
<dbReference type="EC" id="2.7.4.9" evidence="1"/>
<dbReference type="EMBL" id="CP000002">
    <property type="protein sequence ID" value="AAU21676.1"/>
    <property type="molecule type" value="Genomic_DNA"/>
</dbReference>
<dbReference type="EMBL" id="AE017333">
    <property type="protein sequence ID" value="AAU39021.1"/>
    <property type="molecule type" value="Genomic_DNA"/>
</dbReference>
<dbReference type="RefSeq" id="WP_003178154.1">
    <property type="nucleotide sequence ID" value="NC_006322.1"/>
</dbReference>
<dbReference type="SMR" id="Q65PJ3"/>
<dbReference type="STRING" id="279010.BL02509"/>
<dbReference type="GeneID" id="92859007"/>
<dbReference type="KEGG" id="bld:BLi00041"/>
<dbReference type="KEGG" id="bli:BL02509"/>
<dbReference type="eggNOG" id="COG0125">
    <property type="taxonomic scope" value="Bacteria"/>
</dbReference>
<dbReference type="HOGENOM" id="CLU_049131_0_2_9"/>
<dbReference type="Proteomes" id="UP000000606">
    <property type="component" value="Chromosome"/>
</dbReference>
<dbReference type="GO" id="GO:0005829">
    <property type="term" value="C:cytosol"/>
    <property type="evidence" value="ECO:0007669"/>
    <property type="project" value="TreeGrafter"/>
</dbReference>
<dbReference type="GO" id="GO:0005524">
    <property type="term" value="F:ATP binding"/>
    <property type="evidence" value="ECO:0007669"/>
    <property type="project" value="UniProtKB-UniRule"/>
</dbReference>
<dbReference type="GO" id="GO:0004798">
    <property type="term" value="F:dTMP kinase activity"/>
    <property type="evidence" value="ECO:0007669"/>
    <property type="project" value="UniProtKB-UniRule"/>
</dbReference>
<dbReference type="GO" id="GO:0006233">
    <property type="term" value="P:dTDP biosynthetic process"/>
    <property type="evidence" value="ECO:0007669"/>
    <property type="project" value="InterPro"/>
</dbReference>
<dbReference type="GO" id="GO:0006235">
    <property type="term" value="P:dTTP biosynthetic process"/>
    <property type="evidence" value="ECO:0007669"/>
    <property type="project" value="UniProtKB-UniRule"/>
</dbReference>
<dbReference type="GO" id="GO:0006227">
    <property type="term" value="P:dUDP biosynthetic process"/>
    <property type="evidence" value="ECO:0007669"/>
    <property type="project" value="TreeGrafter"/>
</dbReference>
<dbReference type="CDD" id="cd01672">
    <property type="entry name" value="TMPK"/>
    <property type="match status" value="1"/>
</dbReference>
<dbReference type="FunFam" id="3.40.50.300:FF:000225">
    <property type="entry name" value="Thymidylate kinase"/>
    <property type="match status" value="1"/>
</dbReference>
<dbReference type="Gene3D" id="3.40.50.300">
    <property type="entry name" value="P-loop containing nucleotide triphosphate hydrolases"/>
    <property type="match status" value="1"/>
</dbReference>
<dbReference type="HAMAP" id="MF_00165">
    <property type="entry name" value="Thymidylate_kinase"/>
    <property type="match status" value="1"/>
</dbReference>
<dbReference type="InterPro" id="IPR027417">
    <property type="entry name" value="P-loop_NTPase"/>
</dbReference>
<dbReference type="InterPro" id="IPR039430">
    <property type="entry name" value="Thymidylate_kin-like_dom"/>
</dbReference>
<dbReference type="InterPro" id="IPR018095">
    <property type="entry name" value="Thymidylate_kin_CS"/>
</dbReference>
<dbReference type="InterPro" id="IPR018094">
    <property type="entry name" value="Thymidylate_kinase"/>
</dbReference>
<dbReference type="NCBIfam" id="TIGR00041">
    <property type="entry name" value="DTMP_kinase"/>
    <property type="match status" value="1"/>
</dbReference>
<dbReference type="PANTHER" id="PTHR10344">
    <property type="entry name" value="THYMIDYLATE KINASE"/>
    <property type="match status" value="1"/>
</dbReference>
<dbReference type="PANTHER" id="PTHR10344:SF4">
    <property type="entry name" value="UMP-CMP KINASE 2, MITOCHONDRIAL"/>
    <property type="match status" value="1"/>
</dbReference>
<dbReference type="Pfam" id="PF02223">
    <property type="entry name" value="Thymidylate_kin"/>
    <property type="match status" value="1"/>
</dbReference>
<dbReference type="SUPFAM" id="SSF52540">
    <property type="entry name" value="P-loop containing nucleoside triphosphate hydrolases"/>
    <property type="match status" value="1"/>
</dbReference>
<dbReference type="PROSITE" id="PS01331">
    <property type="entry name" value="THYMIDYLATE_KINASE"/>
    <property type="match status" value="1"/>
</dbReference>